<sequence>MAQVQYSGTGRRKNAVARVRLVPGTGKITVNKKDVEEYIPHADLREVINQPFGVTETKGAYDVIVNVNGGGYAGQSGAIRHGIARALLQVDPDFRSALKRAGLLTRDARMVERKKPGLKKARKASQFSKR</sequence>
<proteinExistence type="evidence at protein level"/>
<evidence type="ECO:0000255" key="1">
    <source>
        <dbReference type="HAMAP-Rule" id="MF_00532"/>
    </source>
</evidence>
<evidence type="ECO:0000305" key="2"/>
<evidence type="ECO:0007829" key="3">
    <source>
        <dbReference type="PDB" id="6WUA"/>
    </source>
</evidence>
<feature type="chain" id="PRO_0000111357" description="Small ribosomal subunit protein uS9">
    <location>
        <begin position="1"/>
        <end position="130"/>
    </location>
</feature>
<feature type="strand" evidence="3">
    <location>
        <begin position="6"/>
        <end position="12"/>
    </location>
</feature>
<feature type="strand" evidence="3">
    <location>
        <begin position="15"/>
        <end position="30"/>
    </location>
</feature>
<feature type="helix" evidence="3">
    <location>
        <begin position="35"/>
        <end position="38"/>
    </location>
</feature>
<feature type="strand" evidence="3">
    <location>
        <begin position="41"/>
        <end position="43"/>
    </location>
</feature>
<feature type="helix" evidence="3">
    <location>
        <begin position="45"/>
        <end position="48"/>
    </location>
</feature>
<feature type="helix" evidence="3">
    <location>
        <begin position="50"/>
        <end position="54"/>
    </location>
</feature>
<feature type="strand" evidence="3">
    <location>
        <begin position="61"/>
        <end position="70"/>
    </location>
</feature>
<feature type="helix" evidence="3">
    <location>
        <begin position="74"/>
        <end position="90"/>
    </location>
</feature>
<feature type="helix" evidence="3">
    <location>
        <begin position="92"/>
        <end position="94"/>
    </location>
</feature>
<feature type="helix" evidence="3">
    <location>
        <begin position="97"/>
        <end position="100"/>
    </location>
</feature>
<feature type="strand" evidence="3">
    <location>
        <begin position="118"/>
        <end position="122"/>
    </location>
</feature>
<comment type="similarity">
    <text evidence="1">Belongs to the universal ribosomal protein uS9 family.</text>
</comment>
<gene>
    <name evidence="1" type="primary">rpsI</name>
    <name type="ordered locus">EF_3230</name>
</gene>
<organism>
    <name type="scientific">Enterococcus faecalis (strain ATCC 700802 / V583)</name>
    <dbReference type="NCBI Taxonomy" id="226185"/>
    <lineage>
        <taxon>Bacteria</taxon>
        <taxon>Bacillati</taxon>
        <taxon>Bacillota</taxon>
        <taxon>Bacilli</taxon>
        <taxon>Lactobacillales</taxon>
        <taxon>Enterococcaceae</taxon>
        <taxon>Enterococcus</taxon>
    </lineage>
</organism>
<reference key="1">
    <citation type="journal article" date="2003" name="Science">
        <title>Role of mobile DNA in the evolution of vancomycin-resistant Enterococcus faecalis.</title>
        <authorList>
            <person name="Paulsen I.T."/>
            <person name="Banerjei L."/>
            <person name="Myers G.S.A."/>
            <person name="Nelson K.E."/>
            <person name="Seshadri R."/>
            <person name="Read T.D."/>
            <person name="Fouts D.E."/>
            <person name="Eisen J.A."/>
            <person name="Gill S.R."/>
            <person name="Heidelberg J.F."/>
            <person name="Tettelin H."/>
            <person name="Dodson R.J."/>
            <person name="Umayam L.A."/>
            <person name="Brinkac L.M."/>
            <person name="Beanan M.J."/>
            <person name="Daugherty S.C."/>
            <person name="DeBoy R.T."/>
            <person name="Durkin S.A."/>
            <person name="Kolonay J.F."/>
            <person name="Madupu R."/>
            <person name="Nelson W.C."/>
            <person name="Vamathevan J.J."/>
            <person name="Tran B."/>
            <person name="Upton J."/>
            <person name="Hansen T."/>
            <person name="Shetty J."/>
            <person name="Khouri H.M."/>
            <person name="Utterback T.R."/>
            <person name="Radune D."/>
            <person name="Ketchum K.A."/>
            <person name="Dougherty B.A."/>
            <person name="Fraser C.M."/>
        </authorList>
    </citation>
    <scope>NUCLEOTIDE SEQUENCE [LARGE SCALE GENOMIC DNA]</scope>
    <source>
        <strain>ATCC 700802 / V583</strain>
    </source>
</reference>
<dbReference type="EMBL" id="AE016830">
    <property type="protein sequence ID" value="AAO82899.1"/>
    <property type="molecule type" value="Genomic_DNA"/>
</dbReference>
<dbReference type="RefSeq" id="NP_816829.1">
    <property type="nucleotide sequence ID" value="NC_004668.1"/>
</dbReference>
<dbReference type="RefSeq" id="WP_002354786.1">
    <property type="nucleotide sequence ID" value="NZ_KE136524.1"/>
</dbReference>
<dbReference type="PDB" id="6WUA">
    <property type="method" value="EM"/>
    <property type="resolution" value="3.20 A"/>
    <property type="chains" value="i=3-130"/>
</dbReference>
<dbReference type="PDB" id="7P7Q">
    <property type="method" value="EM"/>
    <property type="resolution" value="2.40 A"/>
    <property type="chains" value="j=1-130"/>
</dbReference>
<dbReference type="PDB" id="7P7R">
    <property type="method" value="EM"/>
    <property type="resolution" value="2.90 A"/>
    <property type="chains" value="j=1-130"/>
</dbReference>
<dbReference type="PDBsum" id="6WUA"/>
<dbReference type="PDBsum" id="7P7Q"/>
<dbReference type="PDBsum" id="7P7R"/>
<dbReference type="EMDB" id="EMD-13241"/>
<dbReference type="EMDB" id="EMD-13242"/>
<dbReference type="SMR" id="Q82Z47"/>
<dbReference type="STRING" id="226185.EF_3230"/>
<dbReference type="EnsemblBacteria" id="AAO82899">
    <property type="protein sequence ID" value="AAO82899"/>
    <property type="gene ID" value="EF_3230"/>
</dbReference>
<dbReference type="GeneID" id="60892466"/>
<dbReference type="KEGG" id="efa:EF3230"/>
<dbReference type="PATRIC" id="fig|226185.45.peg.350"/>
<dbReference type="eggNOG" id="COG0103">
    <property type="taxonomic scope" value="Bacteria"/>
</dbReference>
<dbReference type="HOGENOM" id="CLU_046483_2_1_9"/>
<dbReference type="Proteomes" id="UP000001415">
    <property type="component" value="Chromosome"/>
</dbReference>
<dbReference type="GO" id="GO:0022627">
    <property type="term" value="C:cytosolic small ribosomal subunit"/>
    <property type="evidence" value="ECO:0007669"/>
    <property type="project" value="TreeGrafter"/>
</dbReference>
<dbReference type="GO" id="GO:0003723">
    <property type="term" value="F:RNA binding"/>
    <property type="evidence" value="ECO:0007669"/>
    <property type="project" value="TreeGrafter"/>
</dbReference>
<dbReference type="GO" id="GO:0003735">
    <property type="term" value="F:structural constituent of ribosome"/>
    <property type="evidence" value="ECO:0007669"/>
    <property type="project" value="InterPro"/>
</dbReference>
<dbReference type="GO" id="GO:0006412">
    <property type="term" value="P:translation"/>
    <property type="evidence" value="ECO:0007669"/>
    <property type="project" value="UniProtKB-UniRule"/>
</dbReference>
<dbReference type="FunFam" id="3.30.230.10:FF:000001">
    <property type="entry name" value="30S ribosomal protein S9"/>
    <property type="match status" value="1"/>
</dbReference>
<dbReference type="Gene3D" id="3.30.230.10">
    <property type="match status" value="1"/>
</dbReference>
<dbReference type="HAMAP" id="MF_00532_B">
    <property type="entry name" value="Ribosomal_uS9_B"/>
    <property type="match status" value="1"/>
</dbReference>
<dbReference type="InterPro" id="IPR020568">
    <property type="entry name" value="Ribosomal_Su5_D2-typ_SF"/>
</dbReference>
<dbReference type="InterPro" id="IPR000754">
    <property type="entry name" value="Ribosomal_uS9"/>
</dbReference>
<dbReference type="InterPro" id="IPR023035">
    <property type="entry name" value="Ribosomal_uS9_bac/plastid"/>
</dbReference>
<dbReference type="InterPro" id="IPR020574">
    <property type="entry name" value="Ribosomal_uS9_CS"/>
</dbReference>
<dbReference type="InterPro" id="IPR014721">
    <property type="entry name" value="Ribsml_uS5_D2-typ_fold_subgr"/>
</dbReference>
<dbReference type="NCBIfam" id="NF001099">
    <property type="entry name" value="PRK00132.1"/>
    <property type="match status" value="1"/>
</dbReference>
<dbReference type="PANTHER" id="PTHR21569">
    <property type="entry name" value="RIBOSOMAL PROTEIN S9"/>
    <property type="match status" value="1"/>
</dbReference>
<dbReference type="PANTHER" id="PTHR21569:SF1">
    <property type="entry name" value="SMALL RIBOSOMAL SUBUNIT PROTEIN US9M"/>
    <property type="match status" value="1"/>
</dbReference>
<dbReference type="Pfam" id="PF00380">
    <property type="entry name" value="Ribosomal_S9"/>
    <property type="match status" value="1"/>
</dbReference>
<dbReference type="SUPFAM" id="SSF54211">
    <property type="entry name" value="Ribosomal protein S5 domain 2-like"/>
    <property type="match status" value="1"/>
</dbReference>
<dbReference type="PROSITE" id="PS00360">
    <property type="entry name" value="RIBOSOMAL_S9"/>
    <property type="match status" value="1"/>
</dbReference>
<keyword id="KW-0002">3D-structure</keyword>
<keyword id="KW-1185">Reference proteome</keyword>
<keyword id="KW-0687">Ribonucleoprotein</keyword>
<keyword id="KW-0689">Ribosomal protein</keyword>
<accession>Q82Z47</accession>
<name>RS9_ENTFA</name>
<protein>
    <recommendedName>
        <fullName evidence="1">Small ribosomal subunit protein uS9</fullName>
    </recommendedName>
    <alternativeName>
        <fullName evidence="2">30S ribosomal protein S9</fullName>
    </alternativeName>
</protein>